<name>PNP_PHOLL</name>
<organism>
    <name type="scientific">Photorhabdus laumondii subsp. laumondii (strain DSM 15139 / CIP 105565 / TT01)</name>
    <name type="common">Photorhabdus luminescens subsp. laumondii</name>
    <dbReference type="NCBI Taxonomy" id="243265"/>
    <lineage>
        <taxon>Bacteria</taxon>
        <taxon>Pseudomonadati</taxon>
        <taxon>Pseudomonadota</taxon>
        <taxon>Gammaproteobacteria</taxon>
        <taxon>Enterobacterales</taxon>
        <taxon>Morganellaceae</taxon>
        <taxon>Photorhabdus</taxon>
    </lineage>
</organism>
<comment type="function">
    <text evidence="1">Involved in mRNA degradation. Catalyzes the phosphorolysis of single-stranded polyribonucleotides processively in the 3'- to 5'-direction.</text>
</comment>
<comment type="catalytic activity">
    <reaction evidence="1">
        <text>RNA(n+1) + phosphate = RNA(n) + a ribonucleoside 5'-diphosphate</text>
        <dbReference type="Rhea" id="RHEA:22096"/>
        <dbReference type="Rhea" id="RHEA-COMP:14527"/>
        <dbReference type="Rhea" id="RHEA-COMP:17342"/>
        <dbReference type="ChEBI" id="CHEBI:43474"/>
        <dbReference type="ChEBI" id="CHEBI:57930"/>
        <dbReference type="ChEBI" id="CHEBI:140395"/>
        <dbReference type="EC" id="2.7.7.8"/>
    </reaction>
</comment>
<comment type="cofactor">
    <cofactor evidence="1">
        <name>Mg(2+)</name>
        <dbReference type="ChEBI" id="CHEBI:18420"/>
    </cofactor>
</comment>
<comment type="subunit">
    <text evidence="1">Component of the RNA degradosome, which is a multiprotein complex involved in RNA processing and mRNA degradation.</text>
</comment>
<comment type="subcellular location">
    <subcellularLocation>
        <location evidence="1">Cytoplasm</location>
    </subcellularLocation>
</comment>
<comment type="similarity">
    <text evidence="1">Belongs to the polyribonucleotide nucleotidyltransferase family.</text>
</comment>
<keyword id="KW-0963">Cytoplasm</keyword>
<keyword id="KW-0460">Magnesium</keyword>
<keyword id="KW-0479">Metal-binding</keyword>
<keyword id="KW-0548">Nucleotidyltransferase</keyword>
<keyword id="KW-1185">Reference proteome</keyword>
<keyword id="KW-0694">RNA-binding</keyword>
<keyword id="KW-0808">Transferase</keyword>
<evidence type="ECO:0000255" key="1">
    <source>
        <dbReference type="HAMAP-Rule" id="MF_01595"/>
    </source>
</evidence>
<sequence length="709" mass="76915">MLNPIVRKFQYGQHTVAIETGMMARQATAAVMVNMDDTAVFVTVVGQKKVKEGQDFFPLTVNYQERTYAAGRVPGSFFRREGRPGEGETLVARLIDRPLRPLFPDGFLNEVQIVATVVSVNPQVNPDIVAMIGASAVLALSGIPFNGPIGAARVGYINDQYVLNPTSDELKNSRLDLVVSGTAGAVLMVESEADILTEEQMLGAVVFGHEQQQVVIDNINALAAEAGKEKWNWVPESVNQALHDRVAGLAEDRLGDAYRITEKQERYAQVDAIKEEVTAALLEQDEALEEAEIHEILGSLEKKVVRSRVLRGEPRIDGREKDMVRALDVRTGVLPRTHGSALFTRGETQALVTATLGTERDAQIIDELMGERTDRFLLHYNFPPYSVGETGMMGSPKRREIGHGRLAKRGVAAVMPKANEFPYTVRVVSEITESNGSSSMASVCGASLALMDAGVPIKAAVAGIAMGLVKEDDNFVVLSDILGDEDHLGDMDFKVAGSCEGISALQMDIKIEGITREIMQIALNQAKGARLHILSVMEQAINSPRNDISEFAPRIHTIKINPDKIKDVIGKGGSVIRALTEETGTTIEIEDDGTVKIAATDGEKAKHAISRIEEITAEIEVARIYTGKVTRIVDFGAFVAIGGGKEGLVHISQIADKRVEKVADYLQVGQEVSVKVLEIDRQGRVRLSIKEATVGVIVEDTPVAPQSAE</sequence>
<protein>
    <recommendedName>
        <fullName evidence="1">Polyribonucleotide nucleotidyltransferase</fullName>
        <ecNumber evidence="1">2.7.7.8</ecNumber>
    </recommendedName>
    <alternativeName>
        <fullName evidence="1">Polynucleotide phosphorylase</fullName>
        <shortName evidence="1">PNPase</shortName>
    </alternativeName>
</protein>
<gene>
    <name evidence="1" type="primary">pnp</name>
    <name type="ordered locus">plu4525</name>
</gene>
<reference key="1">
    <citation type="journal article" date="2003" name="Nat. Biotechnol.">
        <title>The genome sequence of the entomopathogenic bacterium Photorhabdus luminescens.</title>
        <authorList>
            <person name="Duchaud E."/>
            <person name="Rusniok C."/>
            <person name="Frangeul L."/>
            <person name="Buchrieser C."/>
            <person name="Givaudan A."/>
            <person name="Taourit S."/>
            <person name="Bocs S."/>
            <person name="Boursaux-Eude C."/>
            <person name="Chandler M."/>
            <person name="Charles J.-F."/>
            <person name="Dassa E."/>
            <person name="Derose R."/>
            <person name="Derzelle S."/>
            <person name="Freyssinet G."/>
            <person name="Gaudriault S."/>
            <person name="Medigue C."/>
            <person name="Lanois A."/>
            <person name="Powell K."/>
            <person name="Siguier P."/>
            <person name="Vincent R."/>
            <person name="Wingate V."/>
            <person name="Zouine M."/>
            <person name="Glaser P."/>
            <person name="Boemare N."/>
            <person name="Danchin A."/>
            <person name="Kunst F."/>
        </authorList>
    </citation>
    <scope>NUCLEOTIDE SEQUENCE [LARGE SCALE GENOMIC DNA]</scope>
    <source>
        <strain>DSM 15139 / CIP 105565 / TT01</strain>
    </source>
</reference>
<accession>Q7MYZ0</accession>
<proteinExistence type="inferred from homology"/>
<dbReference type="EC" id="2.7.7.8" evidence="1"/>
<dbReference type="EMBL" id="BX571874">
    <property type="protein sequence ID" value="CAE16897.1"/>
    <property type="molecule type" value="Genomic_DNA"/>
</dbReference>
<dbReference type="RefSeq" id="WP_011148601.1">
    <property type="nucleotide sequence ID" value="NC_005126.1"/>
</dbReference>
<dbReference type="SMR" id="Q7MYZ0"/>
<dbReference type="STRING" id="243265.plu4525"/>
<dbReference type="GeneID" id="48850734"/>
<dbReference type="KEGG" id="plu:plu4525"/>
<dbReference type="eggNOG" id="COG1185">
    <property type="taxonomic scope" value="Bacteria"/>
</dbReference>
<dbReference type="HOGENOM" id="CLU_004217_2_2_6"/>
<dbReference type="OrthoDB" id="9804305at2"/>
<dbReference type="Proteomes" id="UP000002514">
    <property type="component" value="Chromosome"/>
</dbReference>
<dbReference type="GO" id="GO:0005829">
    <property type="term" value="C:cytosol"/>
    <property type="evidence" value="ECO:0007669"/>
    <property type="project" value="TreeGrafter"/>
</dbReference>
<dbReference type="GO" id="GO:0000175">
    <property type="term" value="F:3'-5'-RNA exonuclease activity"/>
    <property type="evidence" value="ECO:0007669"/>
    <property type="project" value="TreeGrafter"/>
</dbReference>
<dbReference type="GO" id="GO:0000287">
    <property type="term" value="F:magnesium ion binding"/>
    <property type="evidence" value="ECO:0007669"/>
    <property type="project" value="UniProtKB-UniRule"/>
</dbReference>
<dbReference type="GO" id="GO:0004654">
    <property type="term" value="F:polyribonucleotide nucleotidyltransferase activity"/>
    <property type="evidence" value="ECO:0007669"/>
    <property type="project" value="UniProtKB-UniRule"/>
</dbReference>
<dbReference type="GO" id="GO:0003723">
    <property type="term" value="F:RNA binding"/>
    <property type="evidence" value="ECO:0007669"/>
    <property type="project" value="UniProtKB-UniRule"/>
</dbReference>
<dbReference type="GO" id="GO:0006402">
    <property type="term" value="P:mRNA catabolic process"/>
    <property type="evidence" value="ECO:0007669"/>
    <property type="project" value="UniProtKB-UniRule"/>
</dbReference>
<dbReference type="GO" id="GO:0006396">
    <property type="term" value="P:RNA processing"/>
    <property type="evidence" value="ECO:0007669"/>
    <property type="project" value="InterPro"/>
</dbReference>
<dbReference type="CDD" id="cd02393">
    <property type="entry name" value="KH-I_PNPase"/>
    <property type="match status" value="1"/>
</dbReference>
<dbReference type="CDD" id="cd11363">
    <property type="entry name" value="RNase_PH_PNPase_1"/>
    <property type="match status" value="1"/>
</dbReference>
<dbReference type="CDD" id="cd11364">
    <property type="entry name" value="RNase_PH_PNPase_2"/>
    <property type="match status" value="1"/>
</dbReference>
<dbReference type="CDD" id="cd04472">
    <property type="entry name" value="S1_PNPase"/>
    <property type="match status" value="1"/>
</dbReference>
<dbReference type="FunFam" id="2.40.50.140:FF:000023">
    <property type="entry name" value="Polyribonucleotide nucleotidyltransferase"/>
    <property type="match status" value="1"/>
</dbReference>
<dbReference type="FunFam" id="3.30.1370.10:FF:000001">
    <property type="entry name" value="Polyribonucleotide nucleotidyltransferase"/>
    <property type="match status" value="1"/>
</dbReference>
<dbReference type="FunFam" id="3.30.230.70:FF:000001">
    <property type="entry name" value="Polyribonucleotide nucleotidyltransferase"/>
    <property type="match status" value="1"/>
</dbReference>
<dbReference type="FunFam" id="3.30.230.70:FF:000002">
    <property type="entry name" value="Polyribonucleotide nucleotidyltransferase"/>
    <property type="match status" value="1"/>
</dbReference>
<dbReference type="Gene3D" id="3.30.230.70">
    <property type="entry name" value="GHMP Kinase, N-terminal domain"/>
    <property type="match status" value="2"/>
</dbReference>
<dbReference type="Gene3D" id="3.30.1370.10">
    <property type="entry name" value="K Homology domain, type 1"/>
    <property type="match status" value="1"/>
</dbReference>
<dbReference type="Gene3D" id="2.40.50.140">
    <property type="entry name" value="Nucleic acid-binding proteins"/>
    <property type="match status" value="1"/>
</dbReference>
<dbReference type="HAMAP" id="MF_01595">
    <property type="entry name" value="PNPase"/>
    <property type="match status" value="1"/>
</dbReference>
<dbReference type="InterPro" id="IPR001247">
    <property type="entry name" value="ExoRNase_PH_dom1"/>
</dbReference>
<dbReference type="InterPro" id="IPR015847">
    <property type="entry name" value="ExoRNase_PH_dom2"/>
</dbReference>
<dbReference type="InterPro" id="IPR036345">
    <property type="entry name" value="ExoRNase_PH_dom2_sf"/>
</dbReference>
<dbReference type="InterPro" id="IPR004087">
    <property type="entry name" value="KH_dom"/>
</dbReference>
<dbReference type="InterPro" id="IPR004088">
    <property type="entry name" value="KH_dom_type_1"/>
</dbReference>
<dbReference type="InterPro" id="IPR036612">
    <property type="entry name" value="KH_dom_type_1_sf"/>
</dbReference>
<dbReference type="InterPro" id="IPR012340">
    <property type="entry name" value="NA-bd_OB-fold"/>
</dbReference>
<dbReference type="InterPro" id="IPR012162">
    <property type="entry name" value="PNPase"/>
</dbReference>
<dbReference type="InterPro" id="IPR027408">
    <property type="entry name" value="PNPase/RNase_PH_dom_sf"/>
</dbReference>
<dbReference type="InterPro" id="IPR015848">
    <property type="entry name" value="PNPase_PH_RNA-bd_bac/org-type"/>
</dbReference>
<dbReference type="InterPro" id="IPR036456">
    <property type="entry name" value="PNPase_PH_RNA-bd_sf"/>
</dbReference>
<dbReference type="InterPro" id="IPR020568">
    <property type="entry name" value="Ribosomal_Su5_D2-typ_SF"/>
</dbReference>
<dbReference type="InterPro" id="IPR003029">
    <property type="entry name" value="S1_domain"/>
</dbReference>
<dbReference type="NCBIfam" id="TIGR03591">
    <property type="entry name" value="polynuc_phos"/>
    <property type="match status" value="1"/>
</dbReference>
<dbReference type="NCBIfam" id="NF008805">
    <property type="entry name" value="PRK11824.1"/>
    <property type="match status" value="1"/>
</dbReference>
<dbReference type="PANTHER" id="PTHR11252">
    <property type="entry name" value="POLYRIBONUCLEOTIDE NUCLEOTIDYLTRANSFERASE"/>
    <property type="match status" value="1"/>
</dbReference>
<dbReference type="PANTHER" id="PTHR11252:SF0">
    <property type="entry name" value="POLYRIBONUCLEOTIDE NUCLEOTIDYLTRANSFERASE 1, MITOCHONDRIAL"/>
    <property type="match status" value="1"/>
</dbReference>
<dbReference type="Pfam" id="PF00013">
    <property type="entry name" value="KH_1"/>
    <property type="match status" value="1"/>
</dbReference>
<dbReference type="Pfam" id="PF03726">
    <property type="entry name" value="PNPase"/>
    <property type="match status" value="1"/>
</dbReference>
<dbReference type="Pfam" id="PF01138">
    <property type="entry name" value="RNase_PH"/>
    <property type="match status" value="2"/>
</dbReference>
<dbReference type="Pfam" id="PF03725">
    <property type="entry name" value="RNase_PH_C"/>
    <property type="match status" value="2"/>
</dbReference>
<dbReference type="Pfam" id="PF00575">
    <property type="entry name" value="S1"/>
    <property type="match status" value="1"/>
</dbReference>
<dbReference type="PIRSF" id="PIRSF005499">
    <property type="entry name" value="PNPase"/>
    <property type="match status" value="1"/>
</dbReference>
<dbReference type="SMART" id="SM00322">
    <property type="entry name" value="KH"/>
    <property type="match status" value="1"/>
</dbReference>
<dbReference type="SMART" id="SM00316">
    <property type="entry name" value="S1"/>
    <property type="match status" value="1"/>
</dbReference>
<dbReference type="SUPFAM" id="SSF54791">
    <property type="entry name" value="Eukaryotic type KH-domain (KH-domain type I)"/>
    <property type="match status" value="1"/>
</dbReference>
<dbReference type="SUPFAM" id="SSF50249">
    <property type="entry name" value="Nucleic acid-binding proteins"/>
    <property type="match status" value="1"/>
</dbReference>
<dbReference type="SUPFAM" id="SSF46915">
    <property type="entry name" value="Polynucleotide phosphorylase/guanosine pentaphosphate synthase (PNPase/GPSI), domain 3"/>
    <property type="match status" value="1"/>
</dbReference>
<dbReference type="SUPFAM" id="SSF55666">
    <property type="entry name" value="Ribonuclease PH domain 2-like"/>
    <property type="match status" value="2"/>
</dbReference>
<dbReference type="SUPFAM" id="SSF54211">
    <property type="entry name" value="Ribosomal protein S5 domain 2-like"/>
    <property type="match status" value="2"/>
</dbReference>
<dbReference type="PROSITE" id="PS50084">
    <property type="entry name" value="KH_TYPE_1"/>
    <property type="match status" value="1"/>
</dbReference>
<dbReference type="PROSITE" id="PS50126">
    <property type="entry name" value="S1"/>
    <property type="match status" value="1"/>
</dbReference>
<feature type="chain" id="PRO_0000329758" description="Polyribonucleotide nucleotidyltransferase">
    <location>
        <begin position="1"/>
        <end position="709"/>
    </location>
</feature>
<feature type="domain" description="KH" evidence="1">
    <location>
        <begin position="553"/>
        <end position="612"/>
    </location>
</feature>
<feature type="domain" description="S1 motif" evidence="1">
    <location>
        <begin position="622"/>
        <end position="690"/>
    </location>
</feature>
<feature type="binding site" evidence="1">
    <location>
        <position position="486"/>
    </location>
    <ligand>
        <name>Mg(2+)</name>
        <dbReference type="ChEBI" id="CHEBI:18420"/>
    </ligand>
</feature>
<feature type="binding site" evidence="1">
    <location>
        <position position="492"/>
    </location>
    <ligand>
        <name>Mg(2+)</name>
        <dbReference type="ChEBI" id="CHEBI:18420"/>
    </ligand>
</feature>